<sequence>MRILGIETSCDETGVAIYDDEKGLLAHQLYSQVKLHADYGGVVPELASRDHVKKTIPLIQAALNDAGMTKDDIDGIAYTAGPGLVGALLVGSTIGRSIAYAWDVPAIPVHHMEGHLLAPMLEDNPPEFPFVALLVSGGHTLMVEVKGIGDYQILGESVDDAAGEAFDKTAKLMGLDYPGGPRLSKLAEAGVKGRFKFPRPMTDRPGLDFSFSGLKTFAANTIRANDDDEQTRADIAFAFQEAVADTLAIKCRRALKQTGMKRLVMAGGVSANTYLRQELEAMMKKIGGEVFYPRTEFCTDNGAMIAYAGMQRLKNGETTDLAVQAKPRWPIDQLAPIK</sequence>
<protein>
    <recommendedName>
        <fullName evidence="1">tRNA N6-adenosine threonylcarbamoyltransferase</fullName>
        <ecNumber evidence="1">2.3.1.234</ecNumber>
    </recommendedName>
    <alternativeName>
        <fullName evidence="1">N6-L-threonylcarbamoyladenine synthase</fullName>
        <shortName evidence="1">t(6)A synthase</shortName>
    </alternativeName>
    <alternativeName>
        <fullName evidence="1">t(6)A37 threonylcarbamoyladenosine biosynthesis protein TsaD</fullName>
    </alternativeName>
    <alternativeName>
        <fullName evidence="1">tRNA threonylcarbamoyladenosine biosynthesis protein TsaD</fullName>
    </alternativeName>
</protein>
<comment type="function">
    <text evidence="1">Required for the formation of a threonylcarbamoyl group on adenosine at position 37 (t(6)A37) in tRNAs that read codons beginning with adenine. Is involved in the transfer of the threonylcarbamoyl moiety of threonylcarbamoyl-AMP (TC-AMP) to the N6 group of A37, together with TsaE and TsaB. TsaD likely plays a direct catalytic role in this reaction.</text>
</comment>
<comment type="catalytic activity">
    <reaction evidence="1">
        <text>L-threonylcarbamoyladenylate + adenosine(37) in tRNA = N(6)-L-threonylcarbamoyladenosine(37) in tRNA + AMP + H(+)</text>
        <dbReference type="Rhea" id="RHEA:37059"/>
        <dbReference type="Rhea" id="RHEA-COMP:10162"/>
        <dbReference type="Rhea" id="RHEA-COMP:10163"/>
        <dbReference type="ChEBI" id="CHEBI:15378"/>
        <dbReference type="ChEBI" id="CHEBI:73682"/>
        <dbReference type="ChEBI" id="CHEBI:74411"/>
        <dbReference type="ChEBI" id="CHEBI:74418"/>
        <dbReference type="ChEBI" id="CHEBI:456215"/>
        <dbReference type="EC" id="2.3.1.234"/>
    </reaction>
</comment>
<comment type="cofactor">
    <cofactor evidence="1">
        <name>Fe(2+)</name>
        <dbReference type="ChEBI" id="CHEBI:29033"/>
    </cofactor>
    <text evidence="1">Binds 1 Fe(2+) ion per subunit.</text>
</comment>
<comment type="subcellular location">
    <subcellularLocation>
        <location evidence="1">Cytoplasm</location>
    </subcellularLocation>
</comment>
<comment type="similarity">
    <text evidence="1">Belongs to the KAE1 / TsaD family.</text>
</comment>
<name>TSAD_ALISL</name>
<reference key="1">
    <citation type="journal article" date="2008" name="BMC Genomics">
        <title>The genome sequence of the fish pathogen Aliivibrio salmonicida strain LFI1238 shows extensive evidence of gene decay.</title>
        <authorList>
            <person name="Hjerde E."/>
            <person name="Lorentzen M.S."/>
            <person name="Holden M.T."/>
            <person name="Seeger K."/>
            <person name="Paulsen S."/>
            <person name="Bason N."/>
            <person name="Churcher C."/>
            <person name="Harris D."/>
            <person name="Norbertczak H."/>
            <person name="Quail M.A."/>
            <person name="Sanders S."/>
            <person name="Thurston S."/>
            <person name="Parkhill J."/>
            <person name="Willassen N.P."/>
            <person name="Thomson N.R."/>
        </authorList>
    </citation>
    <scope>NUCLEOTIDE SEQUENCE [LARGE SCALE GENOMIC DNA]</scope>
    <source>
        <strain>LFI1238</strain>
    </source>
</reference>
<evidence type="ECO:0000255" key="1">
    <source>
        <dbReference type="HAMAP-Rule" id="MF_01445"/>
    </source>
</evidence>
<accession>B6EM15</accession>
<dbReference type="EC" id="2.3.1.234" evidence="1"/>
<dbReference type="EMBL" id="FM178379">
    <property type="protein sequence ID" value="CAQ80378.1"/>
    <property type="molecule type" value="Genomic_DNA"/>
</dbReference>
<dbReference type="RefSeq" id="WP_012551146.1">
    <property type="nucleotide sequence ID" value="NC_011312.1"/>
</dbReference>
<dbReference type="SMR" id="B6EM15"/>
<dbReference type="KEGG" id="vsa:VSAL_I2694"/>
<dbReference type="eggNOG" id="COG0533">
    <property type="taxonomic scope" value="Bacteria"/>
</dbReference>
<dbReference type="HOGENOM" id="CLU_023208_0_0_6"/>
<dbReference type="Proteomes" id="UP000001730">
    <property type="component" value="Chromosome 1"/>
</dbReference>
<dbReference type="GO" id="GO:0005737">
    <property type="term" value="C:cytoplasm"/>
    <property type="evidence" value="ECO:0007669"/>
    <property type="project" value="UniProtKB-SubCell"/>
</dbReference>
<dbReference type="GO" id="GO:0005506">
    <property type="term" value="F:iron ion binding"/>
    <property type="evidence" value="ECO:0007669"/>
    <property type="project" value="UniProtKB-UniRule"/>
</dbReference>
<dbReference type="GO" id="GO:0061711">
    <property type="term" value="F:N(6)-L-threonylcarbamoyladenine synthase activity"/>
    <property type="evidence" value="ECO:0007669"/>
    <property type="project" value="UniProtKB-EC"/>
</dbReference>
<dbReference type="GO" id="GO:0002949">
    <property type="term" value="P:tRNA threonylcarbamoyladenosine modification"/>
    <property type="evidence" value="ECO:0007669"/>
    <property type="project" value="UniProtKB-UniRule"/>
</dbReference>
<dbReference type="CDD" id="cd24133">
    <property type="entry name" value="ASKHA_NBD_TsaD_bac"/>
    <property type="match status" value="1"/>
</dbReference>
<dbReference type="FunFam" id="3.30.420.40:FF:000031">
    <property type="entry name" value="tRNA N6-adenosine threonylcarbamoyltransferase"/>
    <property type="match status" value="1"/>
</dbReference>
<dbReference type="Gene3D" id="3.30.420.40">
    <property type="match status" value="2"/>
</dbReference>
<dbReference type="HAMAP" id="MF_01445">
    <property type="entry name" value="TsaD"/>
    <property type="match status" value="1"/>
</dbReference>
<dbReference type="InterPro" id="IPR043129">
    <property type="entry name" value="ATPase_NBD"/>
</dbReference>
<dbReference type="InterPro" id="IPR000905">
    <property type="entry name" value="Gcp-like_dom"/>
</dbReference>
<dbReference type="InterPro" id="IPR017861">
    <property type="entry name" value="KAE1/TsaD"/>
</dbReference>
<dbReference type="InterPro" id="IPR017860">
    <property type="entry name" value="Peptidase_M22_CS"/>
</dbReference>
<dbReference type="InterPro" id="IPR022450">
    <property type="entry name" value="TsaD"/>
</dbReference>
<dbReference type="NCBIfam" id="TIGR00329">
    <property type="entry name" value="gcp_kae1"/>
    <property type="match status" value="1"/>
</dbReference>
<dbReference type="NCBIfam" id="TIGR03723">
    <property type="entry name" value="T6A_TsaD_YgjD"/>
    <property type="match status" value="1"/>
</dbReference>
<dbReference type="PANTHER" id="PTHR11735">
    <property type="entry name" value="TRNA N6-ADENOSINE THREONYLCARBAMOYLTRANSFERASE"/>
    <property type="match status" value="1"/>
</dbReference>
<dbReference type="PANTHER" id="PTHR11735:SF6">
    <property type="entry name" value="TRNA N6-ADENOSINE THREONYLCARBAMOYLTRANSFERASE, MITOCHONDRIAL"/>
    <property type="match status" value="1"/>
</dbReference>
<dbReference type="Pfam" id="PF00814">
    <property type="entry name" value="TsaD"/>
    <property type="match status" value="1"/>
</dbReference>
<dbReference type="PRINTS" id="PR00789">
    <property type="entry name" value="OSIALOPTASE"/>
</dbReference>
<dbReference type="SUPFAM" id="SSF53067">
    <property type="entry name" value="Actin-like ATPase domain"/>
    <property type="match status" value="2"/>
</dbReference>
<dbReference type="PROSITE" id="PS01016">
    <property type="entry name" value="GLYCOPROTEASE"/>
    <property type="match status" value="1"/>
</dbReference>
<gene>
    <name evidence="1" type="primary">tsaD</name>
    <name type="synonym">gcp</name>
    <name type="ordered locus">VSAL_I2694</name>
</gene>
<organism>
    <name type="scientific">Aliivibrio salmonicida (strain LFI1238)</name>
    <name type="common">Vibrio salmonicida (strain LFI1238)</name>
    <dbReference type="NCBI Taxonomy" id="316275"/>
    <lineage>
        <taxon>Bacteria</taxon>
        <taxon>Pseudomonadati</taxon>
        <taxon>Pseudomonadota</taxon>
        <taxon>Gammaproteobacteria</taxon>
        <taxon>Vibrionales</taxon>
        <taxon>Vibrionaceae</taxon>
        <taxon>Aliivibrio</taxon>
    </lineage>
</organism>
<feature type="chain" id="PRO_1000145945" description="tRNA N6-adenosine threonylcarbamoyltransferase">
    <location>
        <begin position="1"/>
        <end position="338"/>
    </location>
</feature>
<feature type="binding site" evidence="1">
    <location>
        <position position="111"/>
    </location>
    <ligand>
        <name>Fe cation</name>
        <dbReference type="ChEBI" id="CHEBI:24875"/>
    </ligand>
</feature>
<feature type="binding site" evidence="1">
    <location>
        <position position="115"/>
    </location>
    <ligand>
        <name>Fe cation</name>
        <dbReference type="ChEBI" id="CHEBI:24875"/>
    </ligand>
</feature>
<feature type="binding site" evidence="1">
    <location>
        <begin position="134"/>
        <end position="138"/>
    </location>
    <ligand>
        <name>substrate</name>
    </ligand>
</feature>
<feature type="binding site" evidence="1">
    <location>
        <position position="167"/>
    </location>
    <ligand>
        <name>substrate</name>
    </ligand>
</feature>
<feature type="binding site" evidence="1">
    <location>
        <position position="180"/>
    </location>
    <ligand>
        <name>substrate</name>
    </ligand>
</feature>
<feature type="binding site" evidence="1">
    <location>
        <position position="272"/>
    </location>
    <ligand>
        <name>substrate</name>
    </ligand>
</feature>
<feature type="binding site" evidence="1">
    <location>
        <position position="300"/>
    </location>
    <ligand>
        <name>Fe cation</name>
        <dbReference type="ChEBI" id="CHEBI:24875"/>
    </ligand>
</feature>
<keyword id="KW-0012">Acyltransferase</keyword>
<keyword id="KW-0963">Cytoplasm</keyword>
<keyword id="KW-0408">Iron</keyword>
<keyword id="KW-0479">Metal-binding</keyword>
<keyword id="KW-0808">Transferase</keyword>
<keyword id="KW-0819">tRNA processing</keyword>
<proteinExistence type="inferred from homology"/>